<evidence type="ECO:0000250" key="1"/>
<evidence type="ECO:0000250" key="2">
    <source>
        <dbReference type="UniProtKB" id="P04275"/>
    </source>
</evidence>
<evidence type="ECO:0000250" key="3">
    <source>
        <dbReference type="UniProtKB" id="Q9VD83"/>
    </source>
</evidence>
<evidence type="ECO:0000255" key="4"/>
<evidence type="ECO:0000255" key="5">
    <source>
        <dbReference type="PROSITE-ProRule" id="PRU00039"/>
    </source>
</evidence>
<evidence type="ECO:0000269" key="6">
    <source>
    </source>
</evidence>
<evidence type="ECO:0000305" key="7"/>
<evidence type="ECO:0000312" key="8">
    <source>
        <dbReference type="EMBL" id="CAH89262.2"/>
    </source>
</evidence>
<protein>
    <recommendedName>
        <fullName>Bursicon</fullName>
    </recommendedName>
    <alternativeName>
        <fullName>Bursicon subunit alpha</fullName>
    </alternativeName>
    <alternativeName>
        <fullName>Cuticle-tanning hormone</fullName>
    </alternativeName>
</protein>
<keyword id="KW-1015">Disulfide bond</keyword>
<keyword id="KW-0372">Hormone</keyword>
<keyword id="KW-1185">Reference proteome</keyword>
<keyword id="KW-0964">Secreted</keyword>
<keyword id="KW-0732">Signal</keyword>
<feature type="signal peptide" evidence="4">
    <location>
        <begin position="1"/>
        <end position="20"/>
    </location>
</feature>
<feature type="chain" id="PRO_0000223887" description="Bursicon">
    <location>
        <begin position="21"/>
        <end position="160"/>
    </location>
</feature>
<feature type="domain" description="CTCK" evidence="5">
    <location>
        <begin position="38"/>
        <end position="131"/>
    </location>
</feature>
<feature type="disulfide bond" evidence="2 5">
    <location>
        <begin position="41"/>
        <end position="90"/>
    </location>
</feature>
<feature type="disulfide bond" evidence="2 5">
    <location>
        <begin position="55"/>
        <end position="104"/>
    </location>
</feature>
<feature type="disulfide bond" evidence="2 5">
    <location>
        <begin position="65"/>
        <end position="125"/>
    </location>
</feature>
<feature type="disulfide bond" evidence="2 5">
    <location>
        <begin position="69"/>
        <end position="127"/>
    </location>
</feature>
<feature type="disulfide bond" evidence="2 5">
    <location>
        <begin position="87"/>
        <end position="130"/>
    </location>
</feature>
<feature type="disulfide bond" description="Interchain" evidence="2 5">
    <location>
        <position position="89"/>
    </location>
</feature>
<accession>Q566B1</accession>
<gene>
    <name evidence="3" type="primary">burs</name>
</gene>
<dbReference type="EMBL" id="BAAB01143969">
    <property type="status" value="NOT_ANNOTATED_CDS"/>
    <property type="molecule type" value="Genomic_DNA"/>
</dbReference>
<dbReference type="EMBL" id="BN000691">
    <property type="protein sequence ID" value="CAH89262.2"/>
    <property type="molecule type" value="mRNA"/>
</dbReference>
<dbReference type="RefSeq" id="NP_001091845.1">
    <property type="nucleotide sequence ID" value="NM_001098375.1"/>
</dbReference>
<dbReference type="FunCoup" id="Q566B1">
    <property type="interactions" value="2"/>
</dbReference>
<dbReference type="STRING" id="7091.Q566B1"/>
<dbReference type="PaxDb" id="7091-BGIBMGA011022-TA"/>
<dbReference type="EnsemblMetazoa" id="NM_001098375.1">
    <property type="protein sequence ID" value="NP_001091845.1"/>
    <property type="gene ID" value="GeneID_100049169"/>
</dbReference>
<dbReference type="GeneID" id="100049169"/>
<dbReference type="KEGG" id="bmor:100049169"/>
<dbReference type="CTD" id="42560"/>
<dbReference type="eggNOG" id="KOG0029">
    <property type="taxonomic scope" value="Eukaryota"/>
</dbReference>
<dbReference type="eggNOG" id="KOG1216">
    <property type="taxonomic scope" value="Eukaryota"/>
</dbReference>
<dbReference type="InParanoid" id="Q566B1"/>
<dbReference type="Proteomes" id="UP000005204">
    <property type="component" value="Unassembled WGS sequence"/>
</dbReference>
<dbReference type="GO" id="GO:0005615">
    <property type="term" value="C:extracellular space"/>
    <property type="evidence" value="ECO:0007669"/>
    <property type="project" value="TreeGrafter"/>
</dbReference>
<dbReference type="GO" id="GO:0036122">
    <property type="term" value="F:BMP binding"/>
    <property type="evidence" value="ECO:0007669"/>
    <property type="project" value="TreeGrafter"/>
</dbReference>
<dbReference type="GO" id="GO:0005179">
    <property type="term" value="F:hormone activity"/>
    <property type="evidence" value="ECO:0007669"/>
    <property type="project" value="UniProtKB-KW"/>
</dbReference>
<dbReference type="GO" id="GO:0009887">
    <property type="term" value="P:animal organ morphogenesis"/>
    <property type="evidence" value="ECO:0007669"/>
    <property type="project" value="TreeGrafter"/>
</dbReference>
<dbReference type="GO" id="GO:0038098">
    <property type="term" value="P:sequestering of BMP from receptor via BMP binding"/>
    <property type="evidence" value="ECO:0007669"/>
    <property type="project" value="TreeGrafter"/>
</dbReference>
<dbReference type="Gene3D" id="2.10.90.10">
    <property type="entry name" value="Cystine-knot cytokines"/>
    <property type="match status" value="1"/>
</dbReference>
<dbReference type="InterPro" id="IPR006207">
    <property type="entry name" value="Cys_knot_C"/>
</dbReference>
<dbReference type="InterPro" id="IPR029034">
    <property type="entry name" value="Cystine-knot_cytokine"/>
</dbReference>
<dbReference type="InterPro" id="IPR004133">
    <property type="entry name" value="DAN"/>
</dbReference>
<dbReference type="PANTHER" id="PTHR15283:SF7">
    <property type="entry name" value="BURSICON"/>
    <property type="match status" value="1"/>
</dbReference>
<dbReference type="PANTHER" id="PTHR15283">
    <property type="entry name" value="GREMLIN 1"/>
    <property type="match status" value="1"/>
</dbReference>
<dbReference type="Pfam" id="PF03045">
    <property type="entry name" value="DAN"/>
    <property type="match status" value="1"/>
</dbReference>
<dbReference type="PROSITE" id="PS01225">
    <property type="entry name" value="CTCK_2"/>
    <property type="match status" value="1"/>
</dbReference>
<proteinExistence type="evidence at transcript level"/>
<reference evidence="7" key="1">
    <citation type="journal article" date="2004" name="DNA Res.">
        <title>The genome sequence of silkworm, Bombyx mori.</title>
        <authorList>
            <person name="Mita K."/>
            <person name="Kasahara M."/>
            <person name="Sasaki S."/>
            <person name="Nagayasu Y."/>
            <person name="Yamada T."/>
            <person name="Kanamori H."/>
            <person name="Namiki N."/>
            <person name="Kitagawa M."/>
            <person name="Yamashita H."/>
            <person name="Yasukochi Y."/>
            <person name="Kadono-Okuda K."/>
            <person name="Yamamoto K."/>
            <person name="Ajimura M."/>
            <person name="Ravikumar G."/>
            <person name="Shimomura M."/>
            <person name="Nagamura Y."/>
            <person name="Shin-I T."/>
            <person name="Abe H."/>
            <person name="Shimada T."/>
            <person name="Morishita S."/>
            <person name="Sasaki T."/>
        </authorList>
    </citation>
    <scope>NUCLEOTIDE SEQUENCE [LARGE SCALE GENOMIC DNA]</scope>
    <source>
        <strain evidence="6">p50T</strain>
    </source>
</reference>
<reference evidence="7 8" key="2">
    <citation type="journal article" date="2005" name="FEBS Lett.">
        <title>Drosophila molting neurohormone bursicon is a heterodimer and the natural agonist of the orphan receptor DLGR2.</title>
        <authorList>
            <person name="Mendive F.M."/>
            <person name="Van Loy T."/>
            <person name="Claeysen S."/>
            <person name="Poels J."/>
            <person name="Williamson M."/>
            <person name="Hauser F."/>
            <person name="Grimmelikhuijzen C.J.P."/>
            <person name="Vassart G."/>
            <person name="Vanden Broeck J.J.M."/>
        </authorList>
    </citation>
    <scope>IDENTIFICATION</scope>
</reference>
<name>BURS_BOMMO</name>
<comment type="function">
    <text evidence="3">Final heterodimeric neurohormone released at the end of the molting cycle, involved in the sclerotization (tanning) of the insect cuticle, melanization and wing spreading.</text>
</comment>
<comment type="subunit">
    <text evidence="1">Heterodimer of burs and pburs.</text>
</comment>
<comment type="subcellular location">
    <subcellularLocation>
        <location evidence="1">Secreted</location>
    </subcellularLocation>
</comment>
<organism>
    <name type="scientific">Bombyx mori</name>
    <name type="common">Silk moth</name>
    <dbReference type="NCBI Taxonomy" id="7091"/>
    <lineage>
        <taxon>Eukaryota</taxon>
        <taxon>Metazoa</taxon>
        <taxon>Ecdysozoa</taxon>
        <taxon>Arthropoda</taxon>
        <taxon>Hexapoda</taxon>
        <taxon>Insecta</taxon>
        <taxon>Pterygota</taxon>
        <taxon>Neoptera</taxon>
        <taxon>Endopterygota</taxon>
        <taxon>Lepidoptera</taxon>
        <taxon>Glossata</taxon>
        <taxon>Ditrysia</taxon>
        <taxon>Bombycoidea</taxon>
        <taxon>Bombycidae</taxon>
        <taxon>Bombycinae</taxon>
        <taxon>Bombyx</taxon>
    </lineage>
</organism>
<sequence length="160" mass="17901">MSVLNTFLVIVALILCYVNDFPVTGHEVQLPPGTKFFCQECQMTAVIHVLKHRGCKPKAIPSFACIGKCTSYVQVSGSKIWQMERTCNCCQESGEREATVVLFCPDAQNEEKRFRKVSTKAPLQCMCRPCGSIEESSIIPQEVAGYSEEGPLYNHFRKSL</sequence>